<gene>
    <name type="ORF">ORF25</name>
</gene>
<organism>
    <name type="scientific">His1 virus (isolate Australia/Victoria)</name>
    <name type="common">His1V</name>
    <name type="synonym">Haloarcula hispanica virus 1</name>
    <dbReference type="NCBI Taxonomy" id="654912"/>
    <lineage>
        <taxon>Viruses</taxon>
        <taxon>Viruses incertae sedis</taxon>
        <taxon>Halspiviridae</taxon>
        <taxon>Salterprovirus</taxon>
        <taxon>Salterprovirus His1</taxon>
    </lineage>
</organism>
<evidence type="ECO:0000255" key="1"/>
<evidence type="ECO:0000305" key="2"/>
<proteinExistence type="predicted"/>
<dbReference type="EMBL" id="AF191796">
    <property type="protein sequence ID" value="AAQ13743.1"/>
    <property type="molecule type" value="Genomic_DNA"/>
</dbReference>
<dbReference type="RefSeq" id="YP_529537.1">
    <property type="nucleotide sequence ID" value="NC_007914.1"/>
</dbReference>
<dbReference type="KEGG" id="vg:5142404"/>
<dbReference type="Proteomes" id="UP000007024">
    <property type="component" value="Segment"/>
</dbReference>
<dbReference type="GO" id="GO:0033644">
    <property type="term" value="C:host cell membrane"/>
    <property type="evidence" value="ECO:0007669"/>
    <property type="project" value="UniProtKB-SubCell"/>
</dbReference>
<dbReference type="GO" id="GO:0016020">
    <property type="term" value="C:membrane"/>
    <property type="evidence" value="ECO:0007669"/>
    <property type="project" value="UniProtKB-KW"/>
</dbReference>
<feature type="chain" id="PRO_0000384893" description="Putative transmembrane protein ORF25">
    <location>
        <begin position="1"/>
        <end position="93"/>
    </location>
</feature>
<feature type="transmembrane region" description="Helical" evidence="1">
    <location>
        <begin position="1"/>
        <end position="21"/>
    </location>
</feature>
<feature type="transmembrane region" description="Helical" evidence="1">
    <location>
        <begin position="22"/>
        <end position="42"/>
    </location>
</feature>
<feature type="transmembrane region" description="Helical" evidence="1">
    <location>
        <begin position="60"/>
        <end position="80"/>
    </location>
</feature>
<name>Y025_HIS1I</name>
<sequence length="93" mass="10055">MAGIHVVLGLFEGALFTNVNAFLVLMIILSGLIGLFSGYASIGAFGSFVSFTHIASTVDLWIFNSMLYIIMTIVFVVMSLQAWQFIGSNGVNQ</sequence>
<organismHost>
    <name type="scientific">Haloarcula hispanica</name>
    <dbReference type="NCBI Taxonomy" id="51589"/>
</organismHost>
<protein>
    <recommendedName>
        <fullName>Putative transmembrane protein ORF25</fullName>
    </recommendedName>
</protein>
<accession>Q25BH0</accession>
<comment type="subcellular location">
    <subcellularLocation>
        <location evidence="2">Host membrane</location>
        <topology evidence="2">Multi-pass membrane protein</topology>
    </subcellularLocation>
</comment>
<reference key="1">
    <citation type="journal article" date="2006" name="Virology">
        <title>His1 and His2 are distantly related, spindle-shaped haloviruses belonging to the novel virus group, Salterprovirus.</title>
        <authorList>
            <person name="Bath C."/>
            <person name="Cukalac T."/>
            <person name="Porter K."/>
            <person name="Dyall-Smith M.L."/>
        </authorList>
    </citation>
    <scope>NUCLEOTIDE SEQUENCE [GENOMIC DNA]</scope>
</reference>
<keyword id="KW-1043">Host membrane</keyword>
<keyword id="KW-0472">Membrane</keyword>
<keyword id="KW-1185">Reference proteome</keyword>
<keyword id="KW-0812">Transmembrane</keyword>
<keyword id="KW-1133">Transmembrane helix</keyword>